<keyword id="KW-0002">3D-structure</keyword>
<keyword id="KW-1015">Disulfide bond</keyword>
<keyword id="KW-0574">Periplasm</keyword>
<keyword id="KW-0676">Redox-active center</keyword>
<keyword id="KW-1185">Reference proteome</keyword>
<keyword id="KW-0732">Signal</keyword>
<evidence type="ECO:0000250" key="1"/>
<evidence type="ECO:0000255" key="2"/>
<evidence type="ECO:0000255" key="3">
    <source>
        <dbReference type="PROSITE-ProRule" id="PRU00691"/>
    </source>
</evidence>
<evidence type="ECO:0000305" key="4"/>
<evidence type="ECO:0007829" key="5">
    <source>
        <dbReference type="PDB" id="3H93"/>
    </source>
</evidence>
<evidence type="ECO:0007829" key="6">
    <source>
        <dbReference type="PDB" id="4ZL8"/>
    </source>
</evidence>
<name>DSBA_PSEAE</name>
<feature type="signal peptide" evidence="2">
    <location>
        <begin position="1"/>
        <end position="22"/>
    </location>
</feature>
<feature type="chain" id="PRO_0000034262" description="Thiol:disulfide interchange protein DsbA">
    <location>
        <begin position="23"/>
        <end position="211"/>
    </location>
</feature>
<feature type="domain" description="Thioredoxin" evidence="3">
    <location>
        <begin position="23"/>
        <end position="203"/>
    </location>
</feature>
<feature type="disulfide bond" description="Redox-active" evidence="3">
    <location>
        <begin position="56"/>
        <end position="59"/>
    </location>
</feature>
<feature type="sequence conflict" description="In Ref. 1." evidence="4" ref="1">
    <location>
        <position position="209"/>
    </location>
</feature>
<feature type="turn" evidence="6">
    <location>
        <begin position="27"/>
        <end position="29"/>
    </location>
</feature>
<feature type="strand" evidence="5">
    <location>
        <begin position="30"/>
        <end position="33"/>
    </location>
</feature>
<feature type="strand" evidence="6">
    <location>
        <begin position="45"/>
        <end position="52"/>
    </location>
</feature>
<feature type="helix" evidence="6">
    <location>
        <begin position="57"/>
        <end position="71"/>
    </location>
</feature>
<feature type="strand" evidence="6">
    <location>
        <begin position="77"/>
        <end position="83"/>
    </location>
</feature>
<feature type="helix" evidence="6">
    <location>
        <begin position="89"/>
        <end position="102"/>
    </location>
</feature>
<feature type="helix" evidence="6">
    <location>
        <begin position="106"/>
        <end position="118"/>
    </location>
</feature>
<feature type="helix" evidence="6">
    <location>
        <begin position="127"/>
        <end position="135"/>
    </location>
</feature>
<feature type="turn" evidence="6">
    <location>
        <begin position="136"/>
        <end position="138"/>
    </location>
</feature>
<feature type="helix" evidence="6">
    <location>
        <begin position="141"/>
        <end position="148"/>
    </location>
</feature>
<feature type="helix" evidence="6">
    <location>
        <begin position="151"/>
        <end position="167"/>
    </location>
</feature>
<feature type="strand" evidence="6">
    <location>
        <begin position="171"/>
        <end position="177"/>
    </location>
</feature>
<feature type="turn" evidence="6">
    <location>
        <begin position="178"/>
        <end position="180"/>
    </location>
</feature>
<feature type="strand" evidence="6">
    <location>
        <begin position="181"/>
        <end position="184"/>
    </location>
</feature>
<feature type="helix" evidence="6">
    <location>
        <begin position="185"/>
        <end position="188"/>
    </location>
</feature>
<feature type="helix" evidence="6">
    <location>
        <begin position="191"/>
        <end position="207"/>
    </location>
</feature>
<proteinExistence type="evidence at protein level"/>
<reference key="1">
    <citation type="submission" date="1997-02" db="EMBL/GenBank/DDBJ databases">
        <title>Cloning and sequencing of a dsbA-homologous gene from Pseudomonas aeruginosa.</title>
        <authorList>
            <person name="Leipelt M."/>
            <person name="Schneidinger B."/>
            <person name="Jaeger K.-E."/>
        </authorList>
    </citation>
    <scope>NUCLEOTIDE SEQUENCE [GENOMIC DNA]</scope>
    <source>
        <strain>ATCC 15692 / DSM 22644 / CIP 104116 / JCM 14847 / LMG 12228 / 1C / PRS 101 / PAO1</strain>
    </source>
</reference>
<reference key="2">
    <citation type="journal article" date="2000" name="Nature">
        <title>Complete genome sequence of Pseudomonas aeruginosa PAO1, an opportunistic pathogen.</title>
        <authorList>
            <person name="Stover C.K."/>
            <person name="Pham X.-Q.T."/>
            <person name="Erwin A.L."/>
            <person name="Mizoguchi S.D."/>
            <person name="Warrener P."/>
            <person name="Hickey M.J."/>
            <person name="Brinkman F.S.L."/>
            <person name="Hufnagle W.O."/>
            <person name="Kowalik D.J."/>
            <person name="Lagrou M."/>
            <person name="Garber R.L."/>
            <person name="Goltry L."/>
            <person name="Tolentino E."/>
            <person name="Westbrock-Wadman S."/>
            <person name="Yuan Y."/>
            <person name="Brody L.L."/>
            <person name="Coulter S.N."/>
            <person name="Folger K.R."/>
            <person name="Kas A."/>
            <person name="Larbig K."/>
            <person name="Lim R.M."/>
            <person name="Smith K.A."/>
            <person name="Spencer D.H."/>
            <person name="Wong G.K.-S."/>
            <person name="Wu Z."/>
            <person name="Paulsen I.T."/>
            <person name="Reizer J."/>
            <person name="Saier M.H. Jr."/>
            <person name="Hancock R.E.W."/>
            <person name="Lory S."/>
            <person name="Olson M.V."/>
        </authorList>
    </citation>
    <scope>NUCLEOTIDE SEQUENCE [LARGE SCALE GENOMIC DNA]</scope>
    <source>
        <strain>ATCC 15692 / DSM 22644 / CIP 104116 / JCM 14847 / LMG 12228 / 1C / PRS 101 / PAO1</strain>
    </source>
</reference>
<sequence length="211" mass="23375">MRNLILTAMLAMASLFGMAAQADDYTAGKEYVELSSPVPVSQPGKIEVVELFWYGCPHCYAFEPTIVPWSEKLPADVHFVRLPALFGGIWNVHGQMFLTLESMGVEHDVHNAVFEAIHKEHKKLATPEEMADFLAGKGVDKEKFLSTYNSFAIKGQMEKAKKLAMAYQVTGVPTMVVNGKYRFDIGSAGGPEETLKLADYLIEKERAAAKK</sequence>
<gene>
    <name type="primary">dsbA</name>
    <name type="ordered locus">PA5489</name>
</gene>
<comment type="function">
    <text evidence="1">Involved in disulfide-bond formation. Acts by transferring its disulfide bond to other proteins (By similarity).</text>
</comment>
<comment type="subcellular location">
    <subcellularLocation>
        <location evidence="1">Periplasm</location>
    </subcellularLocation>
</comment>
<comment type="similarity">
    <text evidence="4">Belongs to the thioredoxin family. DsbA subfamily.</text>
</comment>
<dbReference type="EMBL" id="U84726">
    <property type="protein sequence ID" value="AAB41795.1"/>
    <property type="molecule type" value="Genomic_DNA"/>
</dbReference>
<dbReference type="EMBL" id="AE004091">
    <property type="protein sequence ID" value="AAG08874.1"/>
    <property type="molecule type" value="Genomic_DNA"/>
</dbReference>
<dbReference type="PIR" id="H82960">
    <property type="entry name" value="H82960"/>
</dbReference>
<dbReference type="RefSeq" id="NP_254176.1">
    <property type="nucleotide sequence ID" value="NC_002516.2"/>
</dbReference>
<dbReference type="RefSeq" id="WP_003096976.1">
    <property type="nucleotide sequence ID" value="NZ_QZGE01000012.1"/>
</dbReference>
<dbReference type="PDB" id="2MBT">
    <property type="method" value="NMR"/>
    <property type="chains" value="A=23-211"/>
</dbReference>
<dbReference type="PDB" id="3H93">
    <property type="method" value="X-ray"/>
    <property type="resolution" value="1.50 A"/>
    <property type="chains" value="A=23-211"/>
</dbReference>
<dbReference type="PDB" id="4ZL7">
    <property type="method" value="X-ray"/>
    <property type="resolution" value="1.92 A"/>
    <property type="chains" value="A=22-211"/>
</dbReference>
<dbReference type="PDB" id="4ZL8">
    <property type="method" value="X-ray"/>
    <property type="resolution" value="1.40 A"/>
    <property type="chains" value="A=22-211"/>
</dbReference>
<dbReference type="PDB" id="4ZL9">
    <property type="method" value="X-ray"/>
    <property type="resolution" value="1.70 A"/>
    <property type="chains" value="A=22-211"/>
</dbReference>
<dbReference type="PDB" id="5DCH">
    <property type="method" value="X-ray"/>
    <property type="resolution" value="1.45 A"/>
    <property type="chains" value="A=22-211"/>
</dbReference>
<dbReference type="PDB" id="5TLQ">
    <property type="method" value="NMR"/>
    <property type="chains" value="A=23-211"/>
</dbReference>
<dbReference type="PDBsum" id="2MBT"/>
<dbReference type="PDBsum" id="3H93"/>
<dbReference type="PDBsum" id="4ZL7"/>
<dbReference type="PDBsum" id="4ZL8"/>
<dbReference type="PDBsum" id="4ZL9"/>
<dbReference type="PDBsum" id="5DCH"/>
<dbReference type="PDBsum" id="5TLQ"/>
<dbReference type="BMRB" id="P0C2B2"/>
<dbReference type="SMR" id="P0C2B2"/>
<dbReference type="FunCoup" id="P0C2B2">
    <property type="interactions" value="182"/>
</dbReference>
<dbReference type="IntAct" id="P0C2B2">
    <property type="interactions" value="1"/>
</dbReference>
<dbReference type="MINT" id="P0C2B2"/>
<dbReference type="STRING" id="208964.PA5489"/>
<dbReference type="PaxDb" id="208964-PA5489"/>
<dbReference type="DNASU" id="877731"/>
<dbReference type="GeneID" id="877731"/>
<dbReference type="KEGG" id="pae:PA5489"/>
<dbReference type="PATRIC" id="fig|208964.12.peg.5754"/>
<dbReference type="PseudoCAP" id="PA5489"/>
<dbReference type="HOGENOM" id="CLU_088255_1_0_6"/>
<dbReference type="InParanoid" id="P0C2B2"/>
<dbReference type="OrthoDB" id="9784896at2"/>
<dbReference type="PhylomeDB" id="P0C2B2"/>
<dbReference type="BioCyc" id="PAER208964:G1FZ6-5616-MONOMER"/>
<dbReference type="BRENDA" id="1.8.4.2">
    <property type="organism ID" value="5087"/>
</dbReference>
<dbReference type="EvolutionaryTrace" id="P0C2B2"/>
<dbReference type="Proteomes" id="UP000002438">
    <property type="component" value="Chromosome"/>
</dbReference>
<dbReference type="GO" id="GO:0030288">
    <property type="term" value="C:outer membrane-bounded periplasmic space"/>
    <property type="evidence" value="ECO:0000318"/>
    <property type="project" value="GO_Central"/>
</dbReference>
<dbReference type="GO" id="GO:0003756">
    <property type="term" value="F:protein disulfide isomerase activity"/>
    <property type="evidence" value="ECO:0000318"/>
    <property type="project" value="GO_Central"/>
</dbReference>
<dbReference type="GO" id="GO:0015035">
    <property type="term" value="F:protein-disulfide reductase activity"/>
    <property type="evidence" value="ECO:0000318"/>
    <property type="project" value="GO_Central"/>
</dbReference>
<dbReference type="GO" id="GO:0071236">
    <property type="term" value="P:cellular response to antibiotic"/>
    <property type="evidence" value="ECO:0000318"/>
    <property type="project" value="GO_Central"/>
</dbReference>
<dbReference type="CDD" id="cd03019">
    <property type="entry name" value="DsbA_DsbA"/>
    <property type="match status" value="1"/>
</dbReference>
<dbReference type="Gene3D" id="3.40.30.10">
    <property type="entry name" value="Glutaredoxin"/>
    <property type="match status" value="1"/>
</dbReference>
<dbReference type="InterPro" id="IPR001853">
    <property type="entry name" value="DSBA-like_thioredoxin_dom"/>
</dbReference>
<dbReference type="InterPro" id="IPR023205">
    <property type="entry name" value="DsbA/DsbL"/>
</dbReference>
<dbReference type="InterPro" id="IPR050824">
    <property type="entry name" value="Thiol_disulfide_DsbA"/>
</dbReference>
<dbReference type="InterPro" id="IPR036249">
    <property type="entry name" value="Thioredoxin-like_sf"/>
</dbReference>
<dbReference type="InterPro" id="IPR017937">
    <property type="entry name" value="Thioredoxin_CS"/>
</dbReference>
<dbReference type="InterPro" id="IPR013766">
    <property type="entry name" value="Thioredoxin_domain"/>
</dbReference>
<dbReference type="PANTHER" id="PTHR35891">
    <property type="entry name" value="THIOL:DISULFIDE INTERCHANGE PROTEIN DSBA"/>
    <property type="match status" value="1"/>
</dbReference>
<dbReference type="PANTHER" id="PTHR35891:SF2">
    <property type="entry name" value="THIOL:DISULFIDE INTERCHANGE PROTEIN DSBA"/>
    <property type="match status" value="1"/>
</dbReference>
<dbReference type="Pfam" id="PF01323">
    <property type="entry name" value="DSBA"/>
    <property type="match status" value="1"/>
</dbReference>
<dbReference type="PIRSF" id="PIRSF001488">
    <property type="entry name" value="Tdi_protein"/>
    <property type="match status" value="1"/>
</dbReference>
<dbReference type="SUPFAM" id="SSF52833">
    <property type="entry name" value="Thioredoxin-like"/>
    <property type="match status" value="1"/>
</dbReference>
<dbReference type="PROSITE" id="PS00194">
    <property type="entry name" value="THIOREDOXIN_1"/>
    <property type="match status" value="1"/>
</dbReference>
<dbReference type="PROSITE" id="PS51352">
    <property type="entry name" value="THIOREDOXIN_2"/>
    <property type="match status" value="1"/>
</dbReference>
<organism>
    <name type="scientific">Pseudomonas aeruginosa (strain ATCC 15692 / DSM 22644 / CIP 104116 / JCM 14847 / LMG 12228 / 1C / PRS 101 / PAO1)</name>
    <dbReference type="NCBI Taxonomy" id="208964"/>
    <lineage>
        <taxon>Bacteria</taxon>
        <taxon>Pseudomonadati</taxon>
        <taxon>Pseudomonadota</taxon>
        <taxon>Gammaproteobacteria</taxon>
        <taxon>Pseudomonadales</taxon>
        <taxon>Pseudomonadaceae</taxon>
        <taxon>Pseudomonas</taxon>
    </lineage>
</organism>
<protein>
    <recommendedName>
        <fullName>Thiol:disulfide interchange protein DsbA</fullName>
    </recommendedName>
</protein>
<accession>P0C2B2</accession>
<accession>P95460</accession>